<protein>
    <recommendedName>
        <fullName evidence="1">DNA ligase</fullName>
        <ecNumber evidence="1">6.5.1.1</ecNumber>
    </recommendedName>
    <alternativeName>
        <fullName evidence="1">Polydeoxyribonucleotide synthase [ATP]</fullName>
    </alternativeName>
</protein>
<gene>
    <name evidence="1" type="primary">lig</name>
    <name evidence="3" type="synonym">ligA</name>
    <name evidence="4" type="ordered locus">HVO_1565</name>
    <name evidence="5" type="ORF">C498_03180</name>
</gene>
<reference key="1">
    <citation type="journal article" date="2010" name="PLoS ONE">
        <title>The complete genome sequence of Haloferax volcanii DS2, a model archaeon.</title>
        <authorList>
            <person name="Hartman A.L."/>
            <person name="Norais C."/>
            <person name="Badger J.H."/>
            <person name="Delmas S."/>
            <person name="Haldenby S."/>
            <person name="Madupu R."/>
            <person name="Robinson J."/>
            <person name="Khouri H."/>
            <person name="Ren Q."/>
            <person name="Lowe T.M."/>
            <person name="Maupin-Furlow J."/>
            <person name="Pohlschroder M."/>
            <person name="Daniels C."/>
            <person name="Pfeiffer F."/>
            <person name="Allers T."/>
            <person name="Eisen J.A."/>
        </authorList>
    </citation>
    <scope>NUCLEOTIDE SEQUENCE [LARGE SCALE GENOMIC DNA]</scope>
    <source>
        <strain>ATCC 29605 / DSM 3757 / JCM 8879 / NBRC 14742 / NCIMB 2012 / VKM B-1768 / DS2</strain>
    </source>
</reference>
<reference key="2">
    <citation type="journal article" date="2014" name="PLoS Genet.">
        <title>Phylogenetically driven sequencing of extremely halophilic archaea reveals strategies for static and dynamic osmo-response.</title>
        <authorList>
            <person name="Becker E.A."/>
            <person name="Seitzer P.M."/>
            <person name="Tritt A."/>
            <person name="Larsen D."/>
            <person name="Krusor M."/>
            <person name="Yao A.I."/>
            <person name="Wu D."/>
            <person name="Madern D."/>
            <person name="Eisen J.A."/>
            <person name="Darling A.E."/>
            <person name="Facciotti M.T."/>
        </authorList>
    </citation>
    <scope>NUCLEOTIDE SEQUENCE [LARGE SCALE GENOMIC DNA]</scope>
    <source>
        <strain>ATCC 29605 / DSM 3757 / JCM 8879 / NBRC 14742 / NCIMB 2012 / VKM B-1768 / DS2</strain>
    </source>
</reference>
<reference key="3">
    <citation type="journal article" date="2006" name="Mol. Microbiol.">
        <title>ATP- and NAD+-dependent DNA ligases share an essential function in the halophilic archaeon Haloferax volcanii.</title>
        <authorList>
            <person name="Zhao A."/>
            <person name="Gray F.C."/>
            <person name="MacNeill S.A."/>
        </authorList>
    </citation>
    <scope>DISRUPTION PHENOTYPE</scope>
    <scope>GENE NAME</scope>
</reference>
<evidence type="ECO:0000255" key="1">
    <source>
        <dbReference type="HAMAP-Rule" id="MF_00407"/>
    </source>
</evidence>
<evidence type="ECO:0000269" key="2">
    <source>
    </source>
</evidence>
<evidence type="ECO:0000303" key="3">
    <source>
    </source>
</evidence>
<evidence type="ECO:0000312" key="4">
    <source>
        <dbReference type="EMBL" id="ADE02689.1"/>
    </source>
</evidence>
<evidence type="ECO:0000312" key="5">
    <source>
        <dbReference type="EMBL" id="ELY35790.1"/>
    </source>
</evidence>
<accession>D4GYZ4</accession>
<comment type="function">
    <text evidence="1">DNA ligase that seals nicks in double-stranded DNA during DNA replication, DNA recombination and DNA repair.</text>
</comment>
<comment type="catalytic activity">
    <reaction evidence="1">
        <text>ATP + (deoxyribonucleotide)n-3'-hydroxyl + 5'-phospho-(deoxyribonucleotide)m = (deoxyribonucleotide)n+m + AMP + diphosphate.</text>
        <dbReference type="EC" id="6.5.1.1"/>
    </reaction>
</comment>
<comment type="cofactor">
    <cofactor evidence="1">
        <name>Mg(2+)</name>
        <dbReference type="ChEBI" id="CHEBI:18420"/>
    </cofactor>
</comment>
<comment type="disruption phenotype">
    <text evidence="2">Inactivation renders cells sensitive to DNA damage. Deletion of both ligA and ligN is lethal.</text>
</comment>
<comment type="similarity">
    <text evidence="1">Belongs to the ATP-dependent DNA ligase family.</text>
</comment>
<sequence length="585" mass="62738">MQFAEFAARAAEIEAEPADLAVVSLLSDLFSDAGDDLPTVARFVQGRVFPAWDSTTLDIGPRLCHEAIARAAGPNVSADDVEDRLADRGEIGAVAASYDFGGQRGLAAFGSGEQDGLTVAEVDSELRALAAASGSGSEETKLKTLYGLFNRTDPDEARFLARLVLSEMRIGVGEGTVRDAVAEAFLVAPADAAAIRDDDADAETEAAARERRNEAIAAVARALQVSNDYGMVAGLARDEGEAGLDGVRLEVGRPVQAMLAQAGTAADALGEWGTAAVETKFDGARVQVHRDADGEVSLFSRNMEDVTDALPEVVEFVAGAVDDPVILDGEVVAMDDGGEPLPFQEILRRFRRKHDVDRMREEVRVELRAFDCLHAAGDDLLADPLAARHDRLTALLGDDSPAVSDLLLSDDPDEIAAYEADALDAGHEGIMLKNPDAPYSPGDRGKNWLKRKPDVETLDLVVTGAEWGEGRRAEFLGTFLLSARVEAESGDDAFETIGKVATGITDEELAELTDLLEPEIEREAGKEVDIRPSVVFEVGYEEIQTSPTYSSGYALRFPRFVTVREDKTAETADSLDRVERLADSQ</sequence>
<dbReference type="EC" id="6.5.1.1" evidence="1"/>
<dbReference type="EMBL" id="CP001956">
    <property type="protein sequence ID" value="ADE02689.1"/>
    <property type="molecule type" value="Genomic_DNA"/>
</dbReference>
<dbReference type="EMBL" id="AOHU01000028">
    <property type="protein sequence ID" value="ELY35790.1"/>
    <property type="molecule type" value="Genomic_DNA"/>
</dbReference>
<dbReference type="RefSeq" id="WP_004041443.1">
    <property type="nucleotide sequence ID" value="NC_013967.1"/>
</dbReference>
<dbReference type="SMR" id="D4GYZ4"/>
<dbReference type="STRING" id="309800.HVO_1565"/>
<dbReference type="PaxDb" id="309800-C498_03180"/>
<dbReference type="EnsemblBacteria" id="ADE02689">
    <property type="protein sequence ID" value="ADE02689"/>
    <property type="gene ID" value="HVO_1565"/>
</dbReference>
<dbReference type="GeneID" id="8925424"/>
<dbReference type="KEGG" id="hvo:HVO_1565"/>
<dbReference type="PATRIC" id="fig|309800.29.peg.615"/>
<dbReference type="eggNOG" id="arCOG01347">
    <property type="taxonomic scope" value="Archaea"/>
</dbReference>
<dbReference type="HOGENOM" id="CLU_005138_6_0_2"/>
<dbReference type="OrthoDB" id="31274at2157"/>
<dbReference type="Proteomes" id="UP000008243">
    <property type="component" value="Chromosome"/>
</dbReference>
<dbReference type="Proteomes" id="UP000011532">
    <property type="component" value="Unassembled WGS sequence"/>
</dbReference>
<dbReference type="GO" id="GO:0005524">
    <property type="term" value="F:ATP binding"/>
    <property type="evidence" value="ECO:0007669"/>
    <property type="project" value="UniProtKB-UniRule"/>
</dbReference>
<dbReference type="GO" id="GO:0003677">
    <property type="term" value="F:DNA binding"/>
    <property type="evidence" value="ECO:0007669"/>
    <property type="project" value="InterPro"/>
</dbReference>
<dbReference type="GO" id="GO:0003910">
    <property type="term" value="F:DNA ligase (ATP) activity"/>
    <property type="evidence" value="ECO:0007669"/>
    <property type="project" value="UniProtKB-UniRule"/>
</dbReference>
<dbReference type="GO" id="GO:0046872">
    <property type="term" value="F:metal ion binding"/>
    <property type="evidence" value="ECO:0007669"/>
    <property type="project" value="UniProtKB-KW"/>
</dbReference>
<dbReference type="GO" id="GO:0051301">
    <property type="term" value="P:cell division"/>
    <property type="evidence" value="ECO:0007669"/>
    <property type="project" value="UniProtKB-KW"/>
</dbReference>
<dbReference type="GO" id="GO:0071897">
    <property type="term" value="P:DNA biosynthetic process"/>
    <property type="evidence" value="ECO:0007669"/>
    <property type="project" value="InterPro"/>
</dbReference>
<dbReference type="GO" id="GO:0006310">
    <property type="term" value="P:DNA recombination"/>
    <property type="evidence" value="ECO:0007669"/>
    <property type="project" value="UniProtKB-UniRule"/>
</dbReference>
<dbReference type="GO" id="GO:0006281">
    <property type="term" value="P:DNA repair"/>
    <property type="evidence" value="ECO:0007669"/>
    <property type="project" value="UniProtKB-UniRule"/>
</dbReference>
<dbReference type="GO" id="GO:0006273">
    <property type="term" value="P:lagging strand elongation"/>
    <property type="evidence" value="ECO:0007669"/>
    <property type="project" value="TreeGrafter"/>
</dbReference>
<dbReference type="CDD" id="cd07901">
    <property type="entry name" value="Adenylation_DNA_ligase_Arch_LigB"/>
    <property type="match status" value="1"/>
</dbReference>
<dbReference type="CDD" id="cd07972">
    <property type="entry name" value="OBF_DNA_ligase_Arch_LigB"/>
    <property type="match status" value="1"/>
</dbReference>
<dbReference type="Gene3D" id="1.10.3260.10">
    <property type="entry name" value="DNA ligase, ATP-dependent, N-terminal domain"/>
    <property type="match status" value="1"/>
</dbReference>
<dbReference type="Gene3D" id="3.30.470.30">
    <property type="entry name" value="DNA ligase/mRNA capping enzyme"/>
    <property type="match status" value="1"/>
</dbReference>
<dbReference type="Gene3D" id="2.40.50.140">
    <property type="entry name" value="Nucleic acid-binding proteins"/>
    <property type="match status" value="1"/>
</dbReference>
<dbReference type="HAMAP" id="MF_00407">
    <property type="entry name" value="DNA_ligase"/>
    <property type="match status" value="1"/>
</dbReference>
<dbReference type="InterPro" id="IPR050191">
    <property type="entry name" value="ATP-dep_DNA_ligase"/>
</dbReference>
<dbReference type="InterPro" id="IPR022865">
    <property type="entry name" value="DNA_ligae_ATP-dep_bac/arc"/>
</dbReference>
<dbReference type="InterPro" id="IPR000977">
    <property type="entry name" value="DNA_ligase_ATP-dep"/>
</dbReference>
<dbReference type="InterPro" id="IPR012309">
    <property type="entry name" value="DNA_ligase_ATP-dep_C"/>
</dbReference>
<dbReference type="InterPro" id="IPR012310">
    <property type="entry name" value="DNA_ligase_ATP-dep_cent"/>
</dbReference>
<dbReference type="InterPro" id="IPR016059">
    <property type="entry name" value="DNA_ligase_ATP-dep_CS"/>
</dbReference>
<dbReference type="InterPro" id="IPR012308">
    <property type="entry name" value="DNA_ligase_ATP-dep_N"/>
</dbReference>
<dbReference type="InterPro" id="IPR036599">
    <property type="entry name" value="DNA_ligase_N_sf"/>
</dbReference>
<dbReference type="InterPro" id="IPR054890">
    <property type="entry name" value="LigA_Halo"/>
</dbReference>
<dbReference type="InterPro" id="IPR012340">
    <property type="entry name" value="NA-bd_OB-fold"/>
</dbReference>
<dbReference type="NCBIfam" id="TIGR00574">
    <property type="entry name" value="dnl1"/>
    <property type="match status" value="1"/>
</dbReference>
<dbReference type="NCBIfam" id="NF041331">
    <property type="entry name" value="LigA_Halo"/>
    <property type="match status" value="1"/>
</dbReference>
<dbReference type="PANTHER" id="PTHR45674:SF7">
    <property type="entry name" value="DNA LIGASE"/>
    <property type="match status" value="1"/>
</dbReference>
<dbReference type="PANTHER" id="PTHR45674">
    <property type="entry name" value="DNA LIGASE 1/3 FAMILY MEMBER"/>
    <property type="match status" value="1"/>
</dbReference>
<dbReference type="Pfam" id="PF04679">
    <property type="entry name" value="DNA_ligase_A_C"/>
    <property type="match status" value="1"/>
</dbReference>
<dbReference type="Pfam" id="PF01068">
    <property type="entry name" value="DNA_ligase_A_M"/>
    <property type="match status" value="1"/>
</dbReference>
<dbReference type="Pfam" id="PF04675">
    <property type="entry name" value="DNA_ligase_A_N"/>
    <property type="match status" value="1"/>
</dbReference>
<dbReference type="SUPFAM" id="SSF117018">
    <property type="entry name" value="ATP-dependent DNA ligase DNA-binding domain"/>
    <property type="match status" value="1"/>
</dbReference>
<dbReference type="SUPFAM" id="SSF56091">
    <property type="entry name" value="DNA ligase/mRNA capping enzyme, catalytic domain"/>
    <property type="match status" value="1"/>
</dbReference>
<dbReference type="SUPFAM" id="SSF50249">
    <property type="entry name" value="Nucleic acid-binding proteins"/>
    <property type="match status" value="1"/>
</dbReference>
<dbReference type="PROSITE" id="PS00697">
    <property type="entry name" value="DNA_LIGASE_A1"/>
    <property type="match status" value="1"/>
</dbReference>
<dbReference type="PROSITE" id="PS50160">
    <property type="entry name" value="DNA_LIGASE_A3"/>
    <property type="match status" value="1"/>
</dbReference>
<keyword id="KW-0067">ATP-binding</keyword>
<keyword id="KW-0131">Cell cycle</keyword>
<keyword id="KW-0132">Cell division</keyword>
<keyword id="KW-0227">DNA damage</keyword>
<keyword id="KW-0233">DNA recombination</keyword>
<keyword id="KW-0234">DNA repair</keyword>
<keyword id="KW-0235">DNA replication</keyword>
<keyword id="KW-0436">Ligase</keyword>
<keyword id="KW-0460">Magnesium</keyword>
<keyword id="KW-0479">Metal-binding</keyword>
<keyword id="KW-0547">Nucleotide-binding</keyword>
<keyword id="KW-1185">Reference proteome</keyword>
<organism>
    <name type="scientific">Haloferax volcanii (strain ATCC 29605 / DSM 3757 / JCM 8879 / NBRC 14742 / NCIMB 2012 / VKM B-1768 / DS2)</name>
    <name type="common">Halobacterium volcanii</name>
    <dbReference type="NCBI Taxonomy" id="309800"/>
    <lineage>
        <taxon>Archaea</taxon>
        <taxon>Methanobacteriati</taxon>
        <taxon>Methanobacteriota</taxon>
        <taxon>Stenosarchaea group</taxon>
        <taxon>Halobacteria</taxon>
        <taxon>Halobacteriales</taxon>
        <taxon>Haloferacaceae</taxon>
        <taxon>Haloferax</taxon>
    </lineage>
</organism>
<proteinExistence type="inferred from homology"/>
<name>DNLI_HALVD</name>
<feature type="chain" id="PRO_0000430564" description="DNA ligase">
    <location>
        <begin position="1"/>
        <end position="585"/>
    </location>
</feature>
<feature type="active site" description="N6-AMP-lysine intermediate" evidence="1">
    <location>
        <position position="280"/>
    </location>
</feature>
<feature type="binding site" evidence="1">
    <location>
        <position position="278"/>
    </location>
    <ligand>
        <name>ATP</name>
        <dbReference type="ChEBI" id="CHEBI:30616"/>
    </ligand>
</feature>
<feature type="binding site" evidence="1">
    <location>
        <position position="285"/>
    </location>
    <ligand>
        <name>ATP</name>
        <dbReference type="ChEBI" id="CHEBI:30616"/>
    </ligand>
</feature>
<feature type="binding site" evidence="1">
    <location>
        <position position="301"/>
    </location>
    <ligand>
        <name>ATP</name>
        <dbReference type="ChEBI" id="CHEBI:30616"/>
    </ligand>
</feature>
<feature type="binding site" evidence="1">
    <location>
        <position position="330"/>
    </location>
    <ligand>
        <name>ATP</name>
        <dbReference type="ChEBI" id="CHEBI:30616"/>
    </ligand>
</feature>
<feature type="binding site" evidence="1">
    <location>
        <position position="370"/>
    </location>
    <ligand>
        <name>ATP</name>
        <dbReference type="ChEBI" id="CHEBI:30616"/>
    </ligand>
</feature>
<feature type="binding site" evidence="1">
    <location>
        <position position="444"/>
    </location>
    <ligand>
        <name>ATP</name>
        <dbReference type="ChEBI" id="CHEBI:30616"/>
    </ligand>
</feature>
<feature type="binding site" evidence="1">
    <location>
        <position position="450"/>
    </location>
    <ligand>
        <name>ATP</name>
        <dbReference type="ChEBI" id="CHEBI:30616"/>
    </ligand>
</feature>